<reference key="1">
    <citation type="journal article" date="2009" name="J. Bacteriol.">
        <title>Genome sequences of three Agrobacterium biovars help elucidate the evolution of multichromosome genomes in bacteria.</title>
        <authorList>
            <person name="Slater S.C."/>
            <person name="Goldman B.S."/>
            <person name="Goodner B."/>
            <person name="Setubal J.C."/>
            <person name="Farrand S.K."/>
            <person name="Nester E.W."/>
            <person name="Burr T.J."/>
            <person name="Banta L."/>
            <person name="Dickerman A.W."/>
            <person name="Paulsen I."/>
            <person name="Otten L."/>
            <person name="Suen G."/>
            <person name="Welch R."/>
            <person name="Almeida N.F."/>
            <person name="Arnold F."/>
            <person name="Burton O.T."/>
            <person name="Du Z."/>
            <person name="Ewing A."/>
            <person name="Godsy E."/>
            <person name="Heisel S."/>
            <person name="Houmiel K.L."/>
            <person name="Jhaveri J."/>
            <person name="Lu J."/>
            <person name="Miller N.M."/>
            <person name="Norton S."/>
            <person name="Chen Q."/>
            <person name="Phoolcharoen W."/>
            <person name="Ohlin V."/>
            <person name="Ondrusek D."/>
            <person name="Pride N."/>
            <person name="Stricklin S.L."/>
            <person name="Sun J."/>
            <person name="Wheeler C."/>
            <person name="Wilson L."/>
            <person name="Zhu H."/>
            <person name="Wood D.W."/>
        </authorList>
    </citation>
    <scope>NUCLEOTIDE SEQUENCE [LARGE SCALE GENOMIC DNA]</scope>
    <source>
        <strain>K84 / ATCC BAA-868</strain>
    </source>
</reference>
<organism>
    <name type="scientific">Rhizobium rhizogenes (strain K84 / ATCC BAA-868)</name>
    <name type="common">Agrobacterium radiobacter</name>
    <dbReference type="NCBI Taxonomy" id="311403"/>
    <lineage>
        <taxon>Bacteria</taxon>
        <taxon>Pseudomonadati</taxon>
        <taxon>Pseudomonadota</taxon>
        <taxon>Alphaproteobacteria</taxon>
        <taxon>Hyphomicrobiales</taxon>
        <taxon>Rhizobiaceae</taxon>
        <taxon>Rhizobium/Agrobacterium group</taxon>
        <taxon>Rhizobium</taxon>
    </lineage>
</organism>
<sequence length="717" mass="78354">MSSEQKPVEDLTEEEAAAALAYLAAEIARNDALYHGNDAPEISDAEYDALKRRNDAIEARFPALVRADSPSRRVGAAPSETFMPVVHARPMLSLDNTFSQEDVQDFVAGVYRFLGRLPDQSIAFTAEPKIDGLSMSIRYENGRMVSAATRGDGTTGENVTANIRTIKEIPQTLPAGAPAVVEIRGEVYMAKSDFLALNAQMEAEGKQSYVNPRNTAAGSLRQLDAKVTASRKLKFFAYAWGEMSDMPADTQFGMVQAFGEWGFPVNPLMKRLNSVADILAHYDEIGLQRPDLDYDIDGVVYKVDSLELQARLGFRSRSPRWATAHKFPAEQALTRLLDIDIQVGRTGALTPVARLEPITVGGVVVTNATLHNADYIKGIGNKGEPIRDGRDIRIGDMVIVQRAGDVIPQIVDVVLEKREASSVAYEFPKTCPVCGSHAVRDINEKTGKVDAVTRCTGGFICRAQATEHLKHFVSRNAYDIEGLGSKQIDFFFESDDPALQVRTAPDIFTLERRQQSSLSKLENIDGFGKVSVSKLYAAINERRDIALHRFIFALGIRHVGETTAKLLARSYGTYEAFEAGMKEAAPLAGDAWNDLNNIEGVGEVVARAVVEFYKEPRNVEVISKLLDEVRPQEAEQPTTSGSPVVGKTVVFTGSLEKFTRDEAKAKAESLGAKVSGSVSKKTDIVVAGPGAGSKLDKAREFNVQVMTEDEWLELIGG</sequence>
<gene>
    <name evidence="1" type="primary">ligA</name>
    <name type="ordered locus">Arad_2980</name>
</gene>
<protein>
    <recommendedName>
        <fullName evidence="1">DNA ligase</fullName>
        <ecNumber evidence="1">6.5.1.2</ecNumber>
    </recommendedName>
    <alternativeName>
        <fullName evidence="1">Polydeoxyribonucleotide synthase [NAD(+)]</fullName>
    </alternativeName>
</protein>
<evidence type="ECO:0000255" key="1">
    <source>
        <dbReference type="HAMAP-Rule" id="MF_01588"/>
    </source>
</evidence>
<name>DNLJ_RHIR8</name>
<dbReference type="EC" id="6.5.1.2" evidence="1"/>
<dbReference type="EMBL" id="CP000628">
    <property type="protein sequence ID" value="ACM27036.1"/>
    <property type="molecule type" value="Genomic_DNA"/>
</dbReference>
<dbReference type="RefSeq" id="WP_012651811.1">
    <property type="nucleotide sequence ID" value="NC_011985.1"/>
</dbReference>
<dbReference type="SMR" id="B9JH39"/>
<dbReference type="STRING" id="311403.Arad_2980"/>
<dbReference type="GeneID" id="86848907"/>
<dbReference type="KEGG" id="ara:Arad_2980"/>
<dbReference type="eggNOG" id="COG0272">
    <property type="taxonomic scope" value="Bacteria"/>
</dbReference>
<dbReference type="HOGENOM" id="CLU_007764_2_0_5"/>
<dbReference type="Proteomes" id="UP000001600">
    <property type="component" value="Chromosome 1"/>
</dbReference>
<dbReference type="GO" id="GO:0005829">
    <property type="term" value="C:cytosol"/>
    <property type="evidence" value="ECO:0007669"/>
    <property type="project" value="TreeGrafter"/>
</dbReference>
<dbReference type="GO" id="GO:0003677">
    <property type="term" value="F:DNA binding"/>
    <property type="evidence" value="ECO:0007669"/>
    <property type="project" value="InterPro"/>
</dbReference>
<dbReference type="GO" id="GO:0003911">
    <property type="term" value="F:DNA ligase (NAD+) activity"/>
    <property type="evidence" value="ECO:0007669"/>
    <property type="project" value="UniProtKB-UniRule"/>
</dbReference>
<dbReference type="GO" id="GO:0046872">
    <property type="term" value="F:metal ion binding"/>
    <property type="evidence" value="ECO:0007669"/>
    <property type="project" value="UniProtKB-KW"/>
</dbReference>
<dbReference type="GO" id="GO:0006281">
    <property type="term" value="P:DNA repair"/>
    <property type="evidence" value="ECO:0007669"/>
    <property type="project" value="UniProtKB-KW"/>
</dbReference>
<dbReference type="GO" id="GO:0006260">
    <property type="term" value="P:DNA replication"/>
    <property type="evidence" value="ECO:0007669"/>
    <property type="project" value="UniProtKB-KW"/>
</dbReference>
<dbReference type="CDD" id="cd17748">
    <property type="entry name" value="BRCT_DNA_ligase_like"/>
    <property type="match status" value="1"/>
</dbReference>
<dbReference type="CDD" id="cd00114">
    <property type="entry name" value="LIGANc"/>
    <property type="match status" value="1"/>
</dbReference>
<dbReference type="FunFam" id="3.30.470.30:FF:000001">
    <property type="entry name" value="DNA ligase"/>
    <property type="match status" value="1"/>
</dbReference>
<dbReference type="Gene3D" id="6.20.10.30">
    <property type="match status" value="1"/>
</dbReference>
<dbReference type="Gene3D" id="1.10.150.20">
    <property type="entry name" value="5' to 3' exonuclease, C-terminal subdomain"/>
    <property type="match status" value="2"/>
</dbReference>
<dbReference type="Gene3D" id="3.40.50.10190">
    <property type="entry name" value="BRCT domain"/>
    <property type="match status" value="1"/>
</dbReference>
<dbReference type="Gene3D" id="3.30.470.30">
    <property type="entry name" value="DNA ligase/mRNA capping enzyme"/>
    <property type="match status" value="1"/>
</dbReference>
<dbReference type="Gene3D" id="1.10.287.610">
    <property type="entry name" value="Helix hairpin bin"/>
    <property type="match status" value="1"/>
</dbReference>
<dbReference type="Gene3D" id="2.40.50.140">
    <property type="entry name" value="Nucleic acid-binding proteins"/>
    <property type="match status" value="1"/>
</dbReference>
<dbReference type="HAMAP" id="MF_01588">
    <property type="entry name" value="DNA_ligase_A"/>
    <property type="match status" value="1"/>
</dbReference>
<dbReference type="InterPro" id="IPR001357">
    <property type="entry name" value="BRCT_dom"/>
</dbReference>
<dbReference type="InterPro" id="IPR036420">
    <property type="entry name" value="BRCT_dom_sf"/>
</dbReference>
<dbReference type="InterPro" id="IPR041663">
    <property type="entry name" value="DisA/LigA_HHH"/>
</dbReference>
<dbReference type="InterPro" id="IPR001679">
    <property type="entry name" value="DNA_ligase"/>
</dbReference>
<dbReference type="InterPro" id="IPR033136">
    <property type="entry name" value="DNA_ligase_CS"/>
</dbReference>
<dbReference type="InterPro" id="IPR013839">
    <property type="entry name" value="DNAligase_adenylation"/>
</dbReference>
<dbReference type="InterPro" id="IPR013840">
    <property type="entry name" value="DNAligase_N"/>
</dbReference>
<dbReference type="InterPro" id="IPR003583">
    <property type="entry name" value="Hlx-hairpin-Hlx_DNA-bd_motif"/>
</dbReference>
<dbReference type="InterPro" id="IPR012340">
    <property type="entry name" value="NA-bd_OB-fold"/>
</dbReference>
<dbReference type="InterPro" id="IPR004150">
    <property type="entry name" value="NAD_DNA_ligase_OB"/>
</dbReference>
<dbReference type="InterPro" id="IPR010994">
    <property type="entry name" value="RuvA_2-like"/>
</dbReference>
<dbReference type="InterPro" id="IPR004149">
    <property type="entry name" value="Znf_DNAligase_C4"/>
</dbReference>
<dbReference type="NCBIfam" id="TIGR00575">
    <property type="entry name" value="dnlj"/>
    <property type="match status" value="1"/>
</dbReference>
<dbReference type="NCBIfam" id="NF005932">
    <property type="entry name" value="PRK07956.1"/>
    <property type="match status" value="1"/>
</dbReference>
<dbReference type="PANTHER" id="PTHR23389">
    <property type="entry name" value="CHROMOSOME TRANSMISSION FIDELITY FACTOR 18"/>
    <property type="match status" value="1"/>
</dbReference>
<dbReference type="PANTHER" id="PTHR23389:SF9">
    <property type="entry name" value="DNA LIGASE"/>
    <property type="match status" value="1"/>
</dbReference>
<dbReference type="Pfam" id="PF00533">
    <property type="entry name" value="BRCT"/>
    <property type="match status" value="1"/>
</dbReference>
<dbReference type="Pfam" id="PF01653">
    <property type="entry name" value="DNA_ligase_aden"/>
    <property type="match status" value="1"/>
</dbReference>
<dbReference type="Pfam" id="PF03120">
    <property type="entry name" value="DNA_ligase_OB"/>
    <property type="match status" value="1"/>
</dbReference>
<dbReference type="Pfam" id="PF03119">
    <property type="entry name" value="DNA_ligase_ZBD"/>
    <property type="match status" value="1"/>
</dbReference>
<dbReference type="Pfam" id="PF12826">
    <property type="entry name" value="HHH_2"/>
    <property type="match status" value="1"/>
</dbReference>
<dbReference type="PIRSF" id="PIRSF001604">
    <property type="entry name" value="LigA"/>
    <property type="match status" value="1"/>
</dbReference>
<dbReference type="SMART" id="SM00292">
    <property type="entry name" value="BRCT"/>
    <property type="match status" value="1"/>
</dbReference>
<dbReference type="SMART" id="SM00278">
    <property type="entry name" value="HhH1"/>
    <property type="match status" value="3"/>
</dbReference>
<dbReference type="SMART" id="SM00532">
    <property type="entry name" value="LIGANc"/>
    <property type="match status" value="1"/>
</dbReference>
<dbReference type="SUPFAM" id="SSF52113">
    <property type="entry name" value="BRCT domain"/>
    <property type="match status" value="1"/>
</dbReference>
<dbReference type="SUPFAM" id="SSF56091">
    <property type="entry name" value="DNA ligase/mRNA capping enzyme, catalytic domain"/>
    <property type="match status" value="1"/>
</dbReference>
<dbReference type="SUPFAM" id="SSF50249">
    <property type="entry name" value="Nucleic acid-binding proteins"/>
    <property type="match status" value="1"/>
</dbReference>
<dbReference type="SUPFAM" id="SSF47781">
    <property type="entry name" value="RuvA domain 2-like"/>
    <property type="match status" value="1"/>
</dbReference>
<dbReference type="PROSITE" id="PS50172">
    <property type="entry name" value="BRCT"/>
    <property type="match status" value="1"/>
</dbReference>
<dbReference type="PROSITE" id="PS01056">
    <property type="entry name" value="DNA_LIGASE_N2"/>
    <property type="match status" value="1"/>
</dbReference>
<comment type="function">
    <text evidence="1">DNA ligase that catalyzes the formation of phosphodiester linkages between 5'-phosphoryl and 3'-hydroxyl groups in double-stranded DNA using NAD as a coenzyme and as the energy source for the reaction. It is essential for DNA replication and repair of damaged DNA.</text>
</comment>
<comment type="catalytic activity">
    <reaction evidence="1">
        <text>NAD(+) + (deoxyribonucleotide)n-3'-hydroxyl + 5'-phospho-(deoxyribonucleotide)m = (deoxyribonucleotide)n+m + AMP + beta-nicotinamide D-nucleotide.</text>
        <dbReference type="EC" id="6.5.1.2"/>
    </reaction>
</comment>
<comment type="cofactor">
    <cofactor evidence="1">
        <name>Mg(2+)</name>
        <dbReference type="ChEBI" id="CHEBI:18420"/>
    </cofactor>
    <cofactor evidence="1">
        <name>Mn(2+)</name>
        <dbReference type="ChEBI" id="CHEBI:29035"/>
    </cofactor>
</comment>
<comment type="similarity">
    <text evidence="1">Belongs to the NAD-dependent DNA ligase family. LigA subfamily.</text>
</comment>
<feature type="chain" id="PRO_0000380283" description="DNA ligase">
    <location>
        <begin position="1"/>
        <end position="717"/>
    </location>
</feature>
<feature type="domain" description="BRCT" evidence="1">
    <location>
        <begin position="639"/>
        <end position="717"/>
    </location>
</feature>
<feature type="active site" description="N6-AMP-lysine intermediate" evidence="1">
    <location>
        <position position="129"/>
    </location>
</feature>
<feature type="binding site" evidence="1">
    <location>
        <begin position="44"/>
        <end position="48"/>
    </location>
    <ligand>
        <name>NAD(+)</name>
        <dbReference type="ChEBI" id="CHEBI:57540"/>
    </ligand>
</feature>
<feature type="binding site" evidence="1">
    <location>
        <begin position="93"/>
        <end position="94"/>
    </location>
    <ligand>
        <name>NAD(+)</name>
        <dbReference type="ChEBI" id="CHEBI:57540"/>
    </ligand>
</feature>
<feature type="binding site" evidence="1">
    <location>
        <position position="127"/>
    </location>
    <ligand>
        <name>NAD(+)</name>
        <dbReference type="ChEBI" id="CHEBI:57540"/>
    </ligand>
</feature>
<feature type="binding site" evidence="1">
    <location>
        <position position="150"/>
    </location>
    <ligand>
        <name>NAD(+)</name>
        <dbReference type="ChEBI" id="CHEBI:57540"/>
    </ligand>
</feature>
<feature type="binding site" evidence="1">
    <location>
        <position position="186"/>
    </location>
    <ligand>
        <name>NAD(+)</name>
        <dbReference type="ChEBI" id="CHEBI:57540"/>
    </ligand>
</feature>
<feature type="binding site" evidence="1">
    <location>
        <position position="302"/>
    </location>
    <ligand>
        <name>NAD(+)</name>
        <dbReference type="ChEBI" id="CHEBI:57540"/>
    </ligand>
</feature>
<feature type="binding site" evidence="1">
    <location>
        <position position="326"/>
    </location>
    <ligand>
        <name>NAD(+)</name>
        <dbReference type="ChEBI" id="CHEBI:57540"/>
    </ligand>
</feature>
<feature type="binding site" evidence="1">
    <location>
        <position position="431"/>
    </location>
    <ligand>
        <name>Zn(2+)</name>
        <dbReference type="ChEBI" id="CHEBI:29105"/>
    </ligand>
</feature>
<feature type="binding site" evidence="1">
    <location>
        <position position="434"/>
    </location>
    <ligand>
        <name>Zn(2+)</name>
        <dbReference type="ChEBI" id="CHEBI:29105"/>
    </ligand>
</feature>
<feature type="binding site" evidence="1">
    <location>
        <position position="455"/>
    </location>
    <ligand>
        <name>Zn(2+)</name>
        <dbReference type="ChEBI" id="CHEBI:29105"/>
    </ligand>
</feature>
<feature type="binding site" evidence="1">
    <location>
        <position position="461"/>
    </location>
    <ligand>
        <name>Zn(2+)</name>
        <dbReference type="ChEBI" id="CHEBI:29105"/>
    </ligand>
</feature>
<accession>B9JH39</accession>
<keyword id="KW-0227">DNA damage</keyword>
<keyword id="KW-0234">DNA repair</keyword>
<keyword id="KW-0235">DNA replication</keyword>
<keyword id="KW-0436">Ligase</keyword>
<keyword id="KW-0460">Magnesium</keyword>
<keyword id="KW-0464">Manganese</keyword>
<keyword id="KW-0479">Metal-binding</keyword>
<keyword id="KW-0520">NAD</keyword>
<keyword id="KW-0862">Zinc</keyword>
<proteinExistence type="inferred from homology"/>